<sequence>MIREPQKSAKAASKSSAPRARSSVAKATSTKATSSKAASSKAAPSKAGADAGAAKPRTKGLGKGVIAVAQPSFRRERALIKRGVWPVAGCDEAGRGPLAGPVVAAAVVLDPKRVPKGLDDSKRLTADRREELFEEICATAQVAVAYASPERINRDNILRASLWALTRAVHALPDLPQHVFVDGRDRLATRCESEAVVGGDGLIASIAAASIIAKVSRDRLMCRLAQECPGYGFESHKGYGVPEHLAALARLGPTVHHRRFFAPVAAAWRKIEGVPAEQTGVTGDLFETPVDAGIAATL</sequence>
<dbReference type="EC" id="3.1.26.4" evidence="1"/>
<dbReference type="EMBL" id="CP000283">
    <property type="protein sequence ID" value="ABE38446.1"/>
    <property type="molecule type" value="Genomic_DNA"/>
</dbReference>
<dbReference type="SMR" id="Q13BU3"/>
<dbReference type="STRING" id="316057.RPD_1208"/>
<dbReference type="KEGG" id="rpd:RPD_1208"/>
<dbReference type="eggNOG" id="COG0164">
    <property type="taxonomic scope" value="Bacteria"/>
</dbReference>
<dbReference type="HOGENOM" id="CLU_036532_2_2_5"/>
<dbReference type="BioCyc" id="RPAL316057:RPD_RS06130-MONOMER"/>
<dbReference type="Proteomes" id="UP000001818">
    <property type="component" value="Chromosome"/>
</dbReference>
<dbReference type="GO" id="GO:0005737">
    <property type="term" value="C:cytoplasm"/>
    <property type="evidence" value="ECO:0007669"/>
    <property type="project" value="UniProtKB-SubCell"/>
</dbReference>
<dbReference type="GO" id="GO:0032299">
    <property type="term" value="C:ribonuclease H2 complex"/>
    <property type="evidence" value="ECO:0007669"/>
    <property type="project" value="TreeGrafter"/>
</dbReference>
<dbReference type="GO" id="GO:0030145">
    <property type="term" value="F:manganese ion binding"/>
    <property type="evidence" value="ECO:0007669"/>
    <property type="project" value="UniProtKB-UniRule"/>
</dbReference>
<dbReference type="GO" id="GO:0003723">
    <property type="term" value="F:RNA binding"/>
    <property type="evidence" value="ECO:0007669"/>
    <property type="project" value="InterPro"/>
</dbReference>
<dbReference type="GO" id="GO:0004523">
    <property type="term" value="F:RNA-DNA hybrid ribonuclease activity"/>
    <property type="evidence" value="ECO:0007669"/>
    <property type="project" value="UniProtKB-UniRule"/>
</dbReference>
<dbReference type="GO" id="GO:0043137">
    <property type="term" value="P:DNA replication, removal of RNA primer"/>
    <property type="evidence" value="ECO:0007669"/>
    <property type="project" value="TreeGrafter"/>
</dbReference>
<dbReference type="GO" id="GO:0006298">
    <property type="term" value="P:mismatch repair"/>
    <property type="evidence" value="ECO:0007669"/>
    <property type="project" value="TreeGrafter"/>
</dbReference>
<dbReference type="CDD" id="cd07182">
    <property type="entry name" value="RNase_HII_bacteria_HII_like"/>
    <property type="match status" value="1"/>
</dbReference>
<dbReference type="FunFam" id="3.30.420.10:FF:000078">
    <property type="entry name" value="Ribonuclease HII"/>
    <property type="match status" value="1"/>
</dbReference>
<dbReference type="Gene3D" id="3.30.420.10">
    <property type="entry name" value="Ribonuclease H-like superfamily/Ribonuclease H"/>
    <property type="match status" value="1"/>
</dbReference>
<dbReference type="HAMAP" id="MF_00052_B">
    <property type="entry name" value="RNase_HII_B"/>
    <property type="match status" value="1"/>
</dbReference>
<dbReference type="InterPro" id="IPR022898">
    <property type="entry name" value="RNase_HII"/>
</dbReference>
<dbReference type="InterPro" id="IPR001352">
    <property type="entry name" value="RNase_HII/HIII"/>
</dbReference>
<dbReference type="InterPro" id="IPR024567">
    <property type="entry name" value="RNase_HII/HIII_dom"/>
</dbReference>
<dbReference type="InterPro" id="IPR012337">
    <property type="entry name" value="RNaseH-like_sf"/>
</dbReference>
<dbReference type="InterPro" id="IPR036397">
    <property type="entry name" value="RNaseH_sf"/>
</dbReference>
<dbReference type="NCBIfam" id="NF000595">
    <property type="entry name" value="PRK00015.1-3"/>
    <property type="match status" value="1"/>
</dbReference>
<dbReference type="PANTHER" id="PTHR10954">
    <property type="entry name" value="RIBONUCLEASE H2 SUBUNIT A"/>
    <property type="match status" value="1"/>
</dbReference>
<dbReference type="PANTHER" id="PTHR10954:SF18">
    <property type="entry name" value="RIBONUCLEASE HII"/>
    <property type="match status" value="1"/>
</dbReference>
<dbReference type="Pfam" id="PF01351">
    <property type="entry name" value="RNase_HII"/>
    <property type="match status" value="1"/>
</dbReference>
<dbReference type="SUPFAM" id="SSF53098">
    <property type="entry name" value="Ribonuclease H-like"/>
    <property type="match status" value="1"/>
</dbReference>
<dbReference type="PROSITE" id="PS51975">
    <property type="entry name" value="RNASE_H_2"/>
    <property type="match status" value="1"/>
</dbReference>
<gene>
    <name evidence="1" type="primary">rnhB</name>
    <name type="ordered locus">RPD_1208</name>
</gene>
<organism>
    <name type="scientific">Rhodopseudomonas palustris (strain BisB5)</name>
    <dbReference type="NCBI Taxonomy" id="316057"/>
    <lineage>
        <taxon>Bacteria</taxon>
        <taxon>Pseudomonadati</taxon>
        <taxon>Pseudomonadota</taxon>
        <taxon>Alphaproteobacteria</taxon>
        <taxon>Hyphomicrobiales</taxon>
        <taxon>Nitrobacteraceae</taxon>
        <taxon>Rhodopseudomonas</taxon>
    </lineage>
</organism>
<proteinExistence type="inferred from homology"/>
<keyword id="KW-0963">Cytoplasm</keyword>
<keyword id="KW-0255">Endonuclease</keyword>
<keyword id="KW-0378">Hydrolase</keyword>
<keyword id="KW-0464">Manganese</keyword>
<keyword id="KW-0479">Metal-binding</keyword>
<keyword id="KW-0540">Nuclease</keyword>
<name>RNH2_RHOPS</name>
<reference key="1">
    <citation type="submission" date="2006-03" db="EMBL/GenBank/DDBJ databases">
        <title>Complete sequence of Rhodopseudomonas palustris BisB5.</title>
        <authorList>
            <consortium name="US DOE Joint Genome Institute"/>
            <person name="Copeland A."/>
            <person name="Lucas S."/>
            <person name="Lapidus A."/>
            <person name="Barry K."/>
            <person name="Detter J.C."/>
            <person name="Glavina del Rio T."/>
            <person name="Hammon N."/>
            <person name="Israni S."/>
            <person name="Dalin E."/>
            <person name="Tice H."/>
            <person name="Pitluck S."/>
            <person name="Chain P."/>
            <person name="Malfatti S."/>
            <person name="Shin M."/>
            <person name="Vergez L."/>
            <person name="Schmutz J."/>
            <person name="Larimer F."/>
            <person name="Land M."/>
            <person name="Hauser L."/>
            <person name="Pelletier D.A."/>
            <person name="Kyrpides N."/>
            <person name="Lykidis A."/>
            <person name="Oda Y."/>
            <person name="Harwood C.S."/>
            <person name="Richardson P."/>
        </authorList>
    </citation>
    <scope>NUCLEOTIDE SEQUENCE [LARGE SCALE GENOMIC DNA]</scope>
    <source>
        <strain>BisB5</strain>
    </source>
</reference>
<protein>
    <recommendedName>
        <fullName evidence="1">Ribonuclease HII</fullName>
        <shortName evidence="1">RNase HII</shortName>
        <ecNumber evidence="1">3.1.26.4</ecNumber>
    </recommendedName>
</protein>
<evidence type="ECO:0000255" key="1">
    <source>
        <dbReference type="HAMAP-Rule" id="MF_00052"/>
    </source>
</evidence>
<evidence type="ECO:0000255" key="2">
    <source>
        <dbReference type="PROSITE-ProRule" id="PRU01319"/>
    </source>
</evidence>
<evidence type="ECO:0000256" key="3">
    <source>
        <dbReference type="SAM" id="MobiDB-lite"/>
    </source>
</evidence>
<comment type="function">
    <text evidence="1">Endonuclease that specifically degrades the RNA of RNA-DNA hybrids.</text>
</comment>
<comment type="catalytic activity">
    <reaction evidence="1">
        <text>Endonucleolytic cleavage to 5'-phosphomonoester.</text>
        <dbReference type="EC" id="3.1.26.4"/>
    </reaction>
</comment>
<comment type="cofactor">
    <cofactor evidence="1">
        <name>Mn(2+)</name>
        <dbReference type="ChEBI" id="CHEBI:29035"/>
    </cofactor>
    <cofactor evidence="1">
        <name>Mg(2+)</name>
        <dbReference type="ChEBI" id="CHEBI:18420"/>
    </cofactor>
    <text evidence="1">Manganese or magnesium. Binds 1 divalent metal ion per monomer in the absence of substrate. May bind a second metal ion after substrate binding.</text>
</comment>
<comment type="subcellular location">
    <subcellularLocation>
        <location evidence="1">Cytoplasm</location>
    </subcellularLocation>
</comment>
<comment type="similarity">
    <text evidence="1">Belongs to the RNase HII family.</text>
</comment>
<feature type="chain" id="PRO_1000031191" description="Ribonuclease HII">
    <location>
        <begin position="1"/>
        <end position="298"/>
    </location>
</feature>
<feature type="domain" description="RNase H type-2" evidence="2">
    <location>
        <begin position="85"/>
        <end position="273"/>
    </location>
</feature>
<feature type="region of interest" description="Disordered" evidence="3">
    <location>
        <begin position="1"/>
        <end position="57"/>
    </location>
</feature>
<feature type="compositionally biased region" description="Low complexity" evidence="3">
    <location>
        <begin position="8"/>
        <end position="55"/>
    </location>
</feature>
<feature type="binding site" evidence="1">
    <location>
        <position position="91"/>
    </location>
    <ligand>
        <name>a divalent metal cation</name>
        <dbReference type="ChEBI" id="CHEBI:60240"/>
    </ligand>
</feature>
<feature type="binding site" evidence="1">
    <location>
        <position position="92"/>
    </location>
    <ligand>
        <name>a divalent metal cation</name>
        <dbReference type="ChEBI" id="CHEBI:60240"/>
    </ligand>
</feature>
<feature type="binding site" evidence="1">
    <location>
        <position position="182"/>
    </location>
    <ligand>
        <name>a divalent metal cation</name>
        <dbReference type="ChEBI" id="CHEBI:60240"/>
    </ligand>
</feature>
<accession>Q13BU3</accession>